<protein>
    <recommendedName>
        <fullName evidence="1">2-dehydro-3-deoxyphosphooctonate aldolase</fullName>
        <ecNumber evidence="1">2.5.1.55</ecNumber>
    </recommendedName>
    <alternativeName>
        <fullName evidence="1">3-deoxy-D-manno-octulosonic acid 8-phosphate synthase</fullName>
    </alternativeName>
    <alternativeName>
        <fullName evidence="1">KDO-8-phosphate synthase</fullName>
        <shortName evidence="1">KDO 8-P synthase</shortName>
        <shortName evidence="1">KDOPS</shortName>
    </alternativeName>
    <alternativeName>
        <fullName evidence="1">Phospho-2-dehydro-3-deoxyoctonate aldolase</fullName>
    </alternativeName>
</protein>
<name>KDSA_CAMJE</name>
<sequence>MKKMILIAGPCVIESKDLIFKVAEQLKNFNENPNIEFYFKSSFDKANRTSINSFRGPGLEEGLKILQSVKDEFGMKILTDIHESNQANPVSEVADVLQIPAFLCRQTDLLVAAAKTKAKINIKKGQFLNPSDIKYSVKKVLQTRGIEDEGYEAAQRNGVFVAERGASFGYGNLVVDMRSLVIMREFAPVIFDATHSVQMPGAAGGSSGGKSEFVEPLARAAAAVGIDGFFFETHINPCEALCDGPNMLNLTRLKNCVNTLLEIQNIIKENK</sequence>
<comment type="catalytic activity">
    <reaction evidence="1">
        <text>D-arabinose 5-phosphate + phosphoenolpyruvate + H2O = 3-deoxy-alpha-D-manno-2-octulosonate-8-phosphate + phosphate</text>
        <dbReference type="Rhea" id="RHEA:14053"/>
        <dbReference type="ChEBI" id="CHEBI:15377"/>
        <dbReference type="ChEBI" id="CHEBI:43474"/>
        <dbReference type="ChEBI" id="CHEBI:57693"/>
        <dbReference type="ChEBI" id="CHEBI:58702"/>
        <dbReference type="ChEBI" id="CHEBI:85985"/>
        <dbReference type="EC" id="2.5.1.55"/>
    </reaction>
</comment>
<comment type="pathway">
    <text evidence="1">Carbohydrate biosynthesis; 3-deoxy-D-manno-octulosonate biosynthesis; 3-deoxy-D-manno-octulosonate from D-ribulose 5-phosphate: step 2/3.</text>
</comment>
<comment type="pathway">
    <text evidence="1">Bacterial outer membrane biogenesis; lipopolysaccharide biosynthesis.</text>
</comment>
<comment type="subcellular location">
    <subcellularLocation>
        <location evidence="1">Cytoplasm</location>
    </subcellularLocation>
</comment>
<comment type="similarity">
    <text evidence="1">Belongs to the KdsA family.</text>
</comment>
<organism>
    <name type="scientific">Campylobacter jejuni subsp. jejuni serotype O:2 (strain ATCC 700819 / NCTC 11168)</name>
    <dbReference type="NCBI Taxonomy" id="192222"/>
    <lineage>
        <taxon>Bacteria</taxon>
        <taxon>Pseudomonadati</taxon>
        <taxon>Campylobacterota</taxon>
        <taxon>Epsilonproteobacteria</taxon>
        <taxon>Campylobacterales</taxon>
        <taxon>Campylobacteraceae</taxon>
        <taxon>Campylobacter</taxon>
    </lineage>
</organism>
<proteinExistence type="inferred from homology"/>
<reference key="1">
    <citation type="journal article" date="2000" name="Nature">
        <title>The genome sequence of the food-borne pathogen Campylobacter jejuni reveals hypervariable sequences.</title>
        <authorList>
            <person name="Parkhill J."/>
            <person name="Wren B.W."/>
            <person name="Mungall K.L."/>
            <person name="Ketley J.M."/>
            <person name="Churcher C.M."/>
            <person name="Basham D."/>
            <person name="Chillingworth T."/>
            <person name="Davies R.M."/>
            <person name="Feltwell T."/>
            <person name="Holroyd S."/>
            <person name="Jagels K."/>
            <person name="Karlyshev A.V."/>
            <person name="Moule S."/>
            <person name="Pallen M.J."/>
            <person name="Penn C.W."/>
            <person name="Quail M.A."/>
            <person name="Rajandream M.A."/>
            <person name="Rutherford K.M."/>
            <person name="van Vliet A.H.M."/>
            <person name="Whitehead S."/>
            <person name="Barrell B.G."/>
        </authorList>
    </citation>
    <scope>NUCLEOTIDE SEQUENCE [LARGE SCALE GENOMIC DNA]</scope>
    <source>
        <strain>ATCC 700819 / NCTC 11168</strain>
    </source>
</reference>
<gene>
    <name evidence="1" type="primary">kdsA</name>
    <name type="ordered locus">Cj0384c</name>
</gene>
<accession>Q9PIB8</accession>
<accession>Q0PBC6</accession>
<dbReference type="EC" id="2.5.1.55" evidence="1"/>
<dbReference type="EMBL" id="AL111168">
    <property type="protein sequence ID" value="CAL34534.1"/>
    <property type="molecule type" value="Genomic_DNA"/>
</dbReference>
<dbReference type="PIR" id="F81381">
    <property type="entry name" value="F81381"/>
</dbReference>
<dbReference type="RefSeq" id="WP_002858652.1">
    <property type="nucleotide sequence ID" value="NZ_SZUC01000004.1"/>
</dbReference>
<dbReference type="RefSeq" id="YP_002343821.1">
    <property type="nucleotide sequence ID" value="NC_002163.1"/>
</dbReference>
<dbReference type="SMR" id="Q9PIB8"/>
<dbReference type="IntAct" id="Q9PIB8">
    <property type="interactions" value="3"/>
</dbReference>
<dbReference type="STRING" id="192222.Cj0384c"/>
<dbReference type="PaxDb" id="192222-Cj0384c"/>
<dbReference type="EnsemblBacteria" id="CAL34534">
    <property type="protein sequence ID" value="CAL34534"/>
    <property type="gene ID" value="Cj0384c"/>
</dbReference>
<dbReference type="GeneID" id="904707"/>
<dbReference type="KEGG" id="cje:Cj0384c"/>
<dbReference type="PATRIC" id="fig|192222.6.peg.375"/>
<dbReference type="eggNOG" id="COG2877">
    <property type="taxonomic scope" value="Bacteria"/>
</dbReference>
<dbReference type="HOGENOM" id="CLU_036666_0_0_7"/>
<dbReference type="OrthoDB" id="9802281at2"/>
<dbReference type="UniPathway" id="UPA00030"/>
<dbReference type="UniPathway" id="UPA00357">
    <property type="reaction ID" value="UER00474"/>
</dbReference>
<dbReference type="Proteomes" id="UP000000799">
    <property type="component" value="Chromosome"/>
</dbReference>
<dbReference type="GO" id="GO:0005737">
    <property type="term" value="C:cytoplasm"/>
    <property type="evidence" value="ECO:0007669"/>
    <property type="project" value="UniProtKB-SubCell"/>
</dbReference>
<dbReference type="GO" id="GO:0008676">
    <property type="term" value="F:3-deoxy-8-phosphooctulonate synthase activity"/>
    <property type="evidence" value="ECO:0007669"/>
    <property type="project" value="UniProtKB-UniRule"/>
</dbReference>
<dbReference type="GO" id="GO:0019294">
    <property type="term" value="P:keto-3-deoxy-D-manno-octulosonic acid biosynthetic process"/>
    <property type="evidence" value="ECO:0007669"/>
    <property type="project" value="UniProtKB-UniRule"/>
</dbReference>
<dbReference type="Gene3D" id="3.20.20.70">
    <property type="entry name" value="Aldolase class I"/>
    <property type="match status" value="1"/>
</dbReference>
<dbReference type="HAMAP" id="MF_00056">
    <property type="entry name" value="KDO8P_synth"/>
    <property type="match status" value="1"/>
</dbReference>
<dbReference type="InterPro" id="IPR013785">
    <property type="entry name" value="Aldolase_TIM"/>
</dbReference>
<dbReference type="InterPro" id="IPR006218">
    <property type="entry name" value="DAHP1/KDSA"/>
</dbReference>
<dbReference type="InterPro" id="IPR006269">
    <property type="entry name" value="KDO8P_synthase"/>
</dbReference>
<dbReference type="NCBIfam" id="TIGR01362">
    <property type="entry name" value="KDO8P_synth"/>
    <property type="match status" value="1"/>
</dbReference>
<dbReference type="NCBIfam" id="NF003543">
    <property type="entry name" value="PRK05198.1"/>
    <property type="match status" value="1"/>
</dbReference>
<dbReference type="PANTHER" id="PTHR21057">
    <property type="entry name" value="PHOSPHO-2-DEHYDRO-3-DEOXYHEPTONATE ALDOLASE"/>
    <property type="match status" value="1"/>
</dbReference>
<dbReference type="Pfam" id="PF00793">
    <property type="entry name" value="DAHP_synth_1"/>
    <property type="match status" value="1"/>
</dbReference>
<dbReference type="SUPFAM" id="SSF51569">
    <property type="entry name" value="Aldolase"/>
    <property type="match status" value="1"/>
</dbReference>
<evidence type="ECO:0000255" key="1">
    <source>
        <dbReference type="HAMAP-Rule" id="MF_00056"/>
    </source>
</evidence>
<keyword id="KW-0963">Cytoplasm</keyword>
<keyword id="KW-0448">Lipopolysaccharide biosynthesis</keyword>
<keyword id="KW-1185">Reference proteome</keyword>
<keyword id="KW-0808">Transferase</keyword>
<feature type="chain" id="PRO_0000187112" description="2-dehydro-3-deoxyphosphooctonate aldolase">
    <location>
        <begin position="1"/>
        <end position="271"/>
    </location>
</feature>